<accession>Q54GC9</accession>
<sequence length="40" mass="4361">MITPHNYINNSCTTTITTTTTTTAMNKGGTLFEALVIKKQ</sequence>
<protein>
    <recommendedName>
        <fullName>Uncharacterized protein DDB_G0290235</fullName>
    </recommendedName>
</protein>
<organism>
    <name type="scientific">Dictyostelium discoideum</name>
    <name type="common">Social amoeba</name>
    <dbReference type="NCBI Taxonomy" id="44689"/>
    <lineage>
        <taxon>Eukaryota</taxon>
        <taxon>Amoebozoa</taxon>
        <taxon>Evosea</taxon>
        <taxon>Eumycetozoa</taxon>
        <taxon>Dictyostelia</taxon>
        <taxon>Dictyosteliales</taxon>
        <taxon>Dictyosteliaceae</taxon>
        <taxon>Dictyostelium</taxon>
    </lineage>
</organism>
<name>Y8796_DICDI</name>
<feature type="chain" id="PRO_0000346922" description="Uncharacterized protein DDB_G0290235">
    <location>
        <begin position="1"/>
        <end position="40"/>
    </location>
</feature>
<reference key="1">
    <citation type="journal article" date="2005" name="Nature">
        <title>The genome of the social amoeba Dictyostelium discoideum.</title>
        <authorList>
            <person name="Eichinger L."/>
            <person name="Pachebat J.A."/>
            <person name="Gloeckner G."/>
            <person name="Rajandream M.A."/>
            <person name="Sucgang R."/>
            <person name="Berriman M."/>
            <person name="Song J."/>
            <person name="Olsen R."/>
            <person name="Szafranski K."/>
            <person name="Xu Q."/>
            <person name="Tunggal B."/>
            <person name="Kummerfeld S."/>
            <person name="Madera M."/>
            <person name="Konfortov B.A."/>
            <person name="Rivero F."/>
            <person name="Bankier A.T."/>
            <person name="Lehmann R."/>
            <person name="Hamlin N."/>
            <person name="Davies R."/>
            <person name="Gaudet P."/>
            <person name="Fey P."/>
            <person name="Pilcher K."/>
            <person name="Chen G."/>
            <person name="Saunders D."/>
            <person name="Sodergren E.J."/>
            <person name="Davis P."/>
            <person name="Kerhornou A."/>
            <person name="Nie X."/>
            <person name="Hall N."/>
            <person name="Anjard C."/>
            <person name="Hemphill L."/>
            <person name="Bason N."/>
            <person name="Farbrother P."/>
            <person name="Desany B."/>
            <person name="Just E."/>
            <person name="Morio T."/>
            <person name="Rost R."/>
            <person name="Churcher C.M."/>
            <person name="Cooper J."/>
            <person name="Haydock S."/>
            <person name="van Driessche N."/>
            <person name="Cronin A."/>
            <person name="Goodhead I."/>
            <person name="Muzny D.M."/>
            <person name="Mourier T."/>
            <person name="Pain A."/>
            <person name="Lu M."/>
            <person name="Harper D."/>
            <person name="Lindsay R."/>
            <person name="Hauser H."/>
            <person name="James K.D."/>
            <person name="Quiles M."/>
            <person name="Madan Babu M."/>
            <person name="Saito T."/>
            <person name="Buchrieser C."/>
            <person name="Wardroper A."/>
            <person name="Felder M."/>
            <person name="Thangavelu M."/>
            <person name="Johnson D."/>
            <person name="Knights A."/>
            <person name="Loulseged H."/>
            <person name="Mungall K.L."/>
            <person name="Oliver K."/>
            <person name="Price C."/>
            <person name="Quail M.A."/>
            <person name="Urushihara H."/>
            <person name="Hernandez J."/>
            <person name="Rabbinowitsch E."/>
            <person name="Steffen D."/>
            <person name="Sanders M."/>
            <person name="Ma J."/>
            <person name="Kohara Y."/>
            <person name="Sharp S."/>
            <person name="Simmonds M.N."/>
            <person name="Spiegler S."/>
            <person name="Tivey A."/>
            <person name="Sugano S."/>
            <person name="White B."/>
            <person name="Walker D."/>
            <person name="Woodward J.R."/>
            <person name="Winckler T."/>
            <person name="Tanaka Y."/>
            <person name="Shaulsky G."/>
            <person name="Schleicher M."/>
            <person name="Weinstock G.M."/>
            <person name="Rosenthal A."/>
            <person name="Cox E.C."/>
            <person name="Chisholm R.L."/>
            <person name="Gibbs R.A."/>
            <person name="Loomis W.F."/>
            <person name="Platzer M."/>
            <person name="Kay R.R."/>
            <person name="Williams J.G."/>
            <person name="Dear P.H."/>
            <person name="Noegel A.A."/>
            <person name="Barrell B.G."/>
            <person name="Kuspa A."/>
        </authorList>
    </citation>
    <scope>NUCLEOTIDE SEQUENCE [LARGE SCALE GENOMIC DNA]</scope>
    <source>
        <strain>AX4</strain>
    </source>
</reference>
<proteinExistence type="predicted"/>
<dbReference type="EMBL" id="AAFI02000161">
    <property type="protein sequence ID" value="EAL62339.1"/>
    <property type="molecule type" value="Genomic_DNA"/>
</dbReference>
<dbReference type="RefSeq" id="XP_635849.1">
    <property type="nucleotide sequence ID" value="XM_630757.1"/>
</dbReference>
<dbReference type="PaxDb" id="44689-DDB0302633"/>
<dbReference type="EnsemblProtists" id="EAL62339">
    <property type="protein sequence ID" value="EAL62339"/>
    <property type="gene ID" value="DDB_G0290235"/>
</dbReference>
<dbReference type="GeneID" id="8627557"/>
<dbReference type="KEGG" id="ddi:DDB_G0290235"/>
<dbReference type="dictyBase" id="DDB_G0290235"/>
<dbReference type="HOGENOM" id="CLU_3300460_0_0_1"/>
<dbReference type="InParanoid" id="Q54GC9"/>
<dbReference type="PRO" id="PR:Q54GC9"/>
<dbReference type="Proteomes" id="UP000002195">
    <property type="component" value="Chromosome 5"/>
</dbReference>
<gene>
    <name type="ORF">DDB_G0290235</name>
</gene>
<keyword id="KW-1185">Reference proteome</keyword>